<organism>
    <name type="scientific">Desulfovibrio desulfuricans (strain ATCC 27774 / DSM 6949 / MB)</name>
    <dbReference type="NCBI Taxonomy" id="525146"/>
    <lineage>
        <taxon>Bacteria</taxon>
        <taxon>Pseudomonadati</taxon>
        <taxon>Thermodesulfobacteriota</taxon>
        <taxon>Desulfovibrionia</taxon>
        <taxon>Desulfovibrionales</taxon>
        <taxon>Desulfovibrionaceae</taxon>
        <taxon>Desulfovibrio</taxon>
    </lineage>
</organism>
<evidence type="ECO:0000250" key="1"/>
<evidence type="ECO:0000255" key="2">
    <source>
        <dbReference type="HAMAP-Rule" id="MF_00100"/>
    </source>
</evidence>
<evidence type="ECO:0000256" key="3">
    <source>
        <dbReference type="SAM" id="MobiDB-lite"/>
    </source>
</evidence>
<protein>
    <recommendedName>
        <fullName evidence="2">Translation initiation factor IF-2</fullName>
    </recommendedName>
</protein>
<comment type="function">
    <text evidence="2">One of the essential components for the initiation of protein synthesis. Protects formylmethionyl-tRNA from spontaneous hydrolysis and promotes its binding to the 30S ribosomal subunits. Also involved in the hydrolysis of GTP during the formation of the 70S ribosomal complex.</text>
</comment>
<comment type="subcellular location">
    <subcellularLocation>
        <location evidence="2">Cytoplasm</location>
    </subcellularLocation>
</comment>
<comment type="similarity">
    <text evidence="2">Belongs to the TRAFAC class translation factor GTPase superfamily. Classic translation factor GTPase family. IF-2 subfamily.</text>
</comment>
<feature type="chain" id="PRO_1000118759" description="Translation initiation factor IF-2">
    <location>
        <begin position="1"/>
        <end position="997"/>
    </location>
</feature>
<feature type="domain" description="tr-type G">
    <location>
        <begin position="496"/>
        <end position="665"/>
    </location>
</feature>
<feature type="region of interest" description="Disordered" evidence="3">
    <location>
        <begin position="36"/>
        <end position="415"/>
    </location>
</feature>
<feature type="region of interest" description="G1" evidence="1">
    <location>
        <begin position="505"/>
        <end position="512"/>
    </location>
</feature>
<feature type="region of interest" description="G2" evidence="1">
    <location>
        <begin position="530"/>
        <end position="534"/>
    </location>
</feature>
<feature type="region of interest" description="G3" evidence="1">
    <location>
        <begin position="551"/>
        <end position="554"/>
    </location>
</feature>
<feature type="region of interest" description="G4" evidence="1">
    <location>
        <begin position="605"/>
        <end position="608"/>
    </location>
</feature>
<feature type="region of interest" description="G5" evidence="1">
    <location>
        <begin position="641"/>
        <end position="643"/>
    </location>
</feature>
<feature type="compositionally biased region" description="Basic and acidic residues" evidence="3">
    <location>
        <begin position="45"/>
        <end position="65"/>
    </location>
</feature>
<feature type="compositionally biased region" description="Basic and acidic residues" evidence="3">
    <location>
        <begin position="94"/>
        <end position="107"/>
    </location>
</feature>
<feature type="compositionally biased region" description="Low complexity" evidence="3">
    <location>
        <begin position="108"/>
        <end position="126"/>
    </location>
</feature>
<feature type="compositionally biased region" description="Basic and acidic residues" evidence="3">
    <location>
        <begin position="127"/>
        <end position="147"/>
    </location>
</feature>
<feature type="compositionally biased region" description="Low complexity" evidence="3">
    <location>
        <begin position="151"/>
        <end position="162"/>
    </location>
</feature>
<feature type="compositionally biased region" description="Basic and acidic residues" evidence="3">
    <location>
        <begin position="163"/>
        <end position="181"/>
    </location>
</feature>
<feature type="compositionally biased region" description="Low complexity" evidence="3">
    <location>
        <begin position="182"/>
        <end position="196"/>
    </location>
</feature>
<feature type="compositionally biased region" description="Basic and acidic residues" evidence="3">
    <location>
        <begin position="197"/>
        <end position="214"/>
    </location>
</feature>
<feature type="compositionally biased region" description="Basic and acidic residues" evidence="3">
    <location>
        <begin position="241"/>
        <end position="252"/>
    </location>
</feature>
<feature type="compositionally biased region" description="Gly residues" evidence="3">
    <location>
        <begin position="300"/>
        <end position="309"/>
    </location>
</feature>
<feature type="compositionally biased region" description="Pro residues" evidence="3">
    <location>
        <begin position="316"/>
        <end position="335"/>
    </location>
</feature>
<feature type="compositionally biased region" description="Basic and acidic residues" evidence="3">
    <location>
        <begin position="378"/>
        <end position="388"/>
    </location>
</feature>
<feature type="compositionally biased region" description="Basic residues" evidence="3">
    <location>
        <begin position="390"/>
        <end position="399"/>
    </location>
</feature>
<feature type="binding site" evidence="2">
    <location>
        <begin position="505"/>
        <end position="512"/>
    </location>
    <ligand>
        <name>GTP</name>
        <dbReference type="ChEBI" id="CHEBI:37565"/>
    </ligand>
</feature>
<feature type="binding site" evidence="2">
    <location>
        <begin position="551"/>
        <end position="555"/>
    </location>
    <ligand>
        <name>GTP</name>
        <dbReference type="ChEBI" id="CHEBI:37565"/>
    </ligand>
</feature>
<feature type="binding site" evidence="2">
    <location>
        <begin position="605"/>
        <end position="608"/>
    </location>
    <ligand>
        <name>GTP</name>
        <dbReference type="ChEBI" id="CHEBI:37565"/>
    </ligand>
</feature>
<proteinExistence type="inferred from homology"/>
<keyword id="KW-0963">Cytoplasm</keyword>
<keyword id="KW-0342">GTP-binding</keyword>
<keyword id="KW-0396">Initiation factor</keyword>
<keyword id="KW-0547">Nucleotide-binding</keyword>
<keyword id="KW-0648">Protein biosynthesis</keyword>
<sequence length="997" mass="106103">MSEEKIKVSELAKEFPAVPNKDMLRALRELGASAKSMAGSLTTEEAARVREHFAEQKQADAERSGSHPNVIVRRRRKDADKADAPEVTEAAPAAREEVAPPAEEKPAAVEAPAQAEPVAEAPAASPHKVEEKAAPEAAKAEPAEKAKSSKARVVSAARVISRPGEEEEKKPEPVVESKPEPVAEISPVAAALAAREAAARAEEKSSEKGEEKGAKAARLARPDASAMPEGSSAPTLPQRAPEARTEAWKDADASAAADAAPRRAPRADGGQAPSAAPQVRIISRPAPGSQPDRSTRPAGGRPGAPGGPRGDSAGRPPRPGGPRPSGPGGPRPAGGPRPGGFGQQPAAPASPTDTRDGQSKKKRLKGRRTVDFQQGDFGGRRDDDDSQRLNRGKGRRKGGKPTSSQATQPLKAAKRKIRVTEAIRVADMAHQMGLKANEIIKVLFGLGVMATINQALDFDTATLVASEFGYEVEKAGFSEDDYLTPKEVDAPETLKPRPPVVTIMGHVDHGKTSLLDAIRKSNVTSGEAGGITQHIGAYHVKTKRGEIVFLDTPGHEAFTAMRARGAQVTDLVILVVAADDGVMEQTREAINHARAAGVPIMVAVNKMDKPSADPDRVLRELAELGLQAEEWGGDTIVAKVAAKTRMGLDDLLEMVALQSEIMELKANPDKAAKGHIVEAKLDKGRGPVATVLIQEGTLRQGDSFVCGPFSGRVRALMNDQGKKVKEAGPSLPVEVQGFEGVPEAGEEFFVVSDEKLARRIADSRAIKQRERELASESRVTLETFLSQRKSDQETLTLNLVLKSDVQGSLEAITEALLKQSTDKVRINVVHGGTGAITESDILLASASQAIIIGFNVRPTAKIKDVAEHENVDIRFYEIIYKLVDDIKSAMAGLLAPVQREVYLGQAEVRDTFSVPKIGLIAGSYVADGKIARNAGVRLLRDGVVVYTGKISSLKRFKDDAREVVKGNECGVGLENFNDVKIGDIIEAFETVEEAATL</sequence>
<dbReference type="EMBL" id="CP001358">
    <property type="protein sequence ID" value="ACL47979.1"/>
    <property type="molecule type" value="Genomic_DNA"/>
</dbReference>
<dbReference type="SMR" id="B8J1Y4"/>
<dbReference type="STRING" id="525146.Ddes_0059"/>
<dbReference type="KEGG" id="dds:Ddes_0059"/>
<dbReference type="eggNOG" id="COG0532">
    <property type="taxonomic scope" value="Bacteria"/>
</dbReference>
<dbReference type="HOGENOM" id="CLU_006301_5_1_7"/>
<dbReference type="GO" id="GO:0005829">
    <property type="term" value="C:cytosol"/>
    <property type="evidence" value="ECO:0007669"/>
    <property type="project" value="TreeGrafter"/>
</dbReference>
<dbReference type="GO" id="GO:0005525">
    <property type="term" value="F:GTP binding"/>
    <property type="evidence" value="ECO:0007669"/>
    <property type="project" value="UniProtKB-KW"/>
</dbReference>
<dbReference type="GO" id="GO:0003924">
    <property type="term" value="F:GTPase activity"/>
    <property type="evidence" value="ECO:0007669"/>
    <property type="project" value="UniProtKB-UniRule"/>
</dbReference>
<dbReference type="GO" id="GO:0003743">
    <property type="term" value="F:translation initiation factor activity"/>
    <property type="evidence" value="ECO:0007669"/>
    <property type="project" value="UniProtKB-UniRule"/>
</dbReference>
<dbReference type="CDD" id="cd01887">
    <property type="entry name" value="IF2_eIF5B"/>
    <property type="match status" value="1"/>
</dbReference>
<dbReference type="CDD" id="cd03702">
    <property type="entry name" value="IF2_mtIF2_II"/>
    <property type="match status" value="1"/>
</dbReference>
<dbReference type="CDD" id="cd03692">
    <property type="entry name" value="mtIF2_IVc"/>
    <property type="match status" value="1"/>
</dbReference>
<dbReference type="FunFam" id="2.40.30.10:FF:000007">
    <property type="entry name" value="Translation initiation factor IF-2"/>
    <property type="match status" value="1"/>
</dbReference>
<dbReference type="FunFam" id="2.40.30.10:FF:000008">
    <property type="entry name" value="Translation initiation factor IF-2"/>
    <property type="match status" value="1"/>
</dbReference>
<dbReference type="FunFam" id="3.40.50.10050:FF:000001">
    <property type="entry name" value="Translation initiation factor IF-2"/>
    <property type="match status" value="1"/>
</dbReference>
<dbReference type="FunFam" id="3.40.50.300:FF:000019">
    <property type="entry name" value="Translation initiation factor IF-2"/>
    <property type="match status" value="1"/>
</dbReference>
<dbReference type="Gene3D" id="1.10.10.2480">
    <property type="match status" value="1"/>
</dbReference>
<dbReference type="Gene3D" id="3.40.50.300">
    <property type="entry name" value="P-loop containing nucleotide triphosphate hydrolases"/>
    <property type="match status" value="1"/>
</dbReference>
<dbReference type="Gene3D" id="2.40.30.10">
    <property type="entry name" value="Translation factors"/>
    <property type="match status" value="2"/>
</dbReference>
<dbReference type="Gene3D" id="3.40.50.10050">
    <property type="entry name" value="Translation initiation factor IF- 2, domain 3"/>
    <property type="match status" value="1"/>
</dbReference>
<dbReference type="HAMAP" id="MF_00100_B">
    <property type="entry name" value="IF_2_B"/>
    <property type="match status" value="1"/>
</dbReference>
<dbReference type="InterPro" id="IPR053905">
    <property type="entry name" value="EF-G-like_DII"/>
</dbReference>
<dbReference type="InterPro" id="IPR044145">
    <property type="entry name" value="IF2_II"/>
</dbReference>
<dbReference type="InterPro" id="IPR006847">
    <property type="entry name" value="IF2_N"/>
</dbReference>
<dbReference type="InterPro" id="IPR027417">
    <property type="entry name" value="P-loop_NTPase"/>
</dbReference>
<dbReference type="InterPro" id="IPR005225">
    <property type="entry name" value="Small_GTP-bd"/>
</dbReference>
<dbReference type="InterPro" id="IPR000795">
    <property type="entry name" value="T_Tr_GTP-bd_dom"/>
</dbReference>
<dbReference type="InterPro" id="IPR000178">
    <property type="entry name" value="TF_IF2_bacterial-like"/>
</dbReference>
<dbReference type="InterPro" id="IPR015760">
    <property type="entry name" value="TIF_IF2"/>
</dbReference>
<dbReference type="InterPro" id="IPR023115">
    <property type="entry name" value="TIF_IF2_dom3"/>
</dbReference>
<dbReference type="InterPro" id="IPR036925">
    <property type="entry name" value="TIF_IF2_dom3_sf"/>
</dbReference>
<dbReference type="InterPro" id="IPR009000">
    <property type="entry name" value="Transl_B-barrel_sf"/>
</dbReference>
<dbReference type="NCBIfam" id="TIGR00487">
    <property type="entry name" value="IF-2"/>
    <property type="match status" value="1"/>
</dbReference>
<dbReference type="NCBIfam" id="TIGR00231">
    <property type="entry name" value="small_GTP"/>
    <property type="match status" value="1"/>
</dbReference>
<dbReference type="PANTHER" id="PTHR43381:SF5">
    <property type="entry name" value="TR-TYPE G DOMAIN-CONTAINING PROTEIN"/>
    <property type="match status" value="1"/>
</dbReference>
<dbReference type="PANTHER" id="PTHR43381">
    <property type="entry name" value="TRANSLATION INITIATION FACTOR IF-2-RELATED"/>
    <property type="match status" value="1"/>
</dbReference>
<dbReference type="Pfam" id="PF22042">
    <property type="entry name" value="EF-G_D2"/>
    <property type="match status" value="1"/>
</dbReference>
<dbReference type="Pfam" id="PF00009">
    <property type="entry name" value="GTP_EFTU"/>
    <property type="match status" value="1"/>
</dbReference>
<dbReference type="Pfam" id="PF11987">
    <property type="entry name" value="IF-2"/>
    <property type="match status" value="1"/>
</dbReference>
<dbReference type="Pfam" id="PF04760">
    <property type="entry name" value="IF2_N"/>
    <property type="match status" value="2"/>
</dbReference>
<dbReference type="SUPFAM" id="SSF52156">
    <property type="entry name" value="Initiation factor IF2/eIF5b, domain 3"/>
    <property type="match status" value="1"/>
</dbReference>
<dbReference type="SUPFAM" id="SSF52540">
    <property type="entry name" value="P-loop containing nucleoside triphosphate hydrolases"/>
    <property type="match status" value="1"/>
</dbReference>
<dbReference type="SUPFAM" id="SSF50447">
    <property type="entry name" value="Translation proteins"/>
    <property type="match status" value="2"/>
</dbReference>
<dbReference type="PROSITE" id="PS51722">
    <property type="entry name" value="G_TR_2"/>
    <property type="match status" value="1"/>
</dbReference>
<dbReference type="PROSITE" id="PS01176">
    <property type="entry name" value="IF2"/>
    <property type="match status" value="1"/>
</dbReference>
<gene>
    <name evidence="2" type="primary">infB</name>
    <name type="ordered locus">Ddes_0059</name>
</gene>
<name>IF2_DESDA</name>
<accession>B8J1Y4</accession>
<reference key="1">
    <citation type="submission" date="2009-01" db="EMBL/GenBank/DDBJ databases">
        <title>Complete sequence of Desulfovibrio desulfuricans subsp. desulfuricans str. ATCC 27774.</title>
        <authorList>
            <consortium name="US DOE Joint Genome Institute"/>
            <person name="Lucas S."/>
            <person name="Copeland A."/>
            <person name="Lapidus A."/>
            <person name="Glavina del Rio T."/>
            <person name="Tice H."/>
            <person name="Bruce D."/>
            <person name="Goodwin L."/>
            <person name="Pitluck S."/>
            <person name="Sims D."/>
            <person name="Lu M."/>
            <person name="Kiss H."/>
            <person name="Meineke L."/>
            <person name="Brettin T."/>
            <person name="Detter J.C."/>
            <person name="Han C."/>
            <person name="Larimer F."/>
            <person name="Land M."/>
            <person name="Hauser L."/>
            <person name="Kyrpides N."/>
            <person name="Ovchinnikova G."/>
            <person name="Hazen T.C."/>
        </authorList>
    </citation>
    <scope>NUCLEOTIDE SEQUENCE [LARGE SCALE GENOMIC DNA]</scope>
    <source>
        <strain>ATCC 27774 / DSM 6949 / MB</strain>
    </source>
</reference>